<organism>
    <name type="scientific">Cupriavidus taiwanensis (strain DSM 17343 / BCRC 17206 / CCUG 44338 / CIP 107171 / LMG 19424 / R1)</name>
    <name type="common">Ralstonia taiwanensis (strain LMG 19424)</name>
    <dbReference type="NCBI Taxonomy" id="977880"/>
    <lineage>
        <taxon>Bacteria</taxon>
        <taxon>Pseudomonadati</taxon>
        <taxon>Pseudomonadota</taxon>
        <taxon>Betaproteobacteria</taxon>
        <taxon>Burkholderiales</taxon>
        <taxon>Burkholderiaceae</taxon>
        <taxon>Cupriavidus</taxon>
    </lineage>
</organism>
<reference key="1">
    <citation type="journal article" date="2008" name="Genome Res.">
        <title>Genome sequence of the beta-rhizobium Cupriavidus taiwanensis and comparative genomics of rhizobia.</title>
        <authorList>
            <person name="Amadou C."/>
            <person name="Pascal G."/>
            <person name="Mangenot S."/>
            <person name="Glew M."/>
            <person name="Bontemps C."/>
            <person name="Capela D."/>
            <person name="Carrere S."/>
            <person name="Cruveiller S."/>
            <person name="Dossat C."/>
            <person name="Lajus A."/>
            <person name="Marchetti M."/>
            <person name="Poinsot V."/>
            <person name="Rouy Z."/>
            <person name="Servin B."/>
            <person name="Saad M."/>
            <person name="Schenowitz C."/>
            <person name="Barbe V."/>
            <person name="Batut J."/>
            <person name="Medigue C."/>
            <person name="Masson-Boivin C."/>
        </authorList>
    </citation>
    <scope>NUCLEOTIDE SEQUENCE [LARGE SCALE GENOMIC DNA]</scope>
    <source>
        <strain>DSM 17343 / BCRC 17206 / CCUG 44338 / CIP 107171 / LMG 19424 / R1</strain>
    </source>
</reference>
<accession>B2AH58</accession>
<sequence>MIGNWNYGTGRRKSAVARVFIKSGKGDIVVNGKPIKEYFARETSLMIVRQPLELTAHAETFDIKVNVTGGGETGQAGAVRHGITRALIDYDATLKSALSKAGYVTRDAREVERKKVGFHKARRRKQFSKR</sequence>
<protein>
    <recommendedName>
        <fullName evidence="1">Small ribosomal subunit protein uS9</fullName>
    </recommendedName>
    <alternativeName>
        <fullName evidence="2">30S ribosomal protein S9</fullName>
    </alternativeName>
</protein>
<evidence type="ECO:0000255" key="1">
    <source>
        <dbReference type="HAMAP-Rule" id="MF_00532"/>
    </source>
</evidence>
<evidence type="ECO:0000305" key="2"/>
<keyword id="KW-0687">Ribonucleoprotein</keyword>
<keyword id="KW-0689">Ribosomal protein</keyword>
<dbReference type="EMBL" id="CU633749">
    <property type="protein sequence ID" value="CAP63107.1"/>
    <property type="molecule type" value="Genomic_DNA"/>
</dbReference>
<dbReference type="RefSeq" id="WP_012351769.1">
    <property type="nucleotide sequence ID" value="NC_010528.1"/>
</dbReference>
<dbReference type="SMR" id="B2AH58"/>
<dbReference type="GeneID" id="29762357"/>
<dbReference type="KEGG" id="cti:RALTA_A0439"/>
<dbReference type="eggNOG" id="COG0103">
    <property type="taxonomic scope" value="Bacteria"/>
</dbReference>
<dbReference type="HOGENOM" id="CLU_046483_2_1_4"/>
<dbReference type="BioCyc" id="CTAI977880:RALTA_RS02145-MONOMER"/>
<dbReference type="Proteomes" id="UP000001692">
    <property type="component" value="Chromosome 1"/>
</dbReference>
<dbReference type="GO" id="GO:0022627">
    <property type="term" value="C:cytosolic small ribosomal subunit"/>
    <property type="evidence" value="ECO:0007669"/>
    <property type="project" value="TreeGrafter"/>
</dbReference>
<dbReference type="GO" id="GO:0003723">
    <property type="term" value="F:RNA binding"/>
    <property type="evidence" value="ECO:0007669"/>
    <property type="project" value="TreeGrafter"/>
</dbReference>
<dbReference type="GO" id="GO:0003735">
    <property type="term" value="F:structural constituent of ribosome"/>
    <property type="evidence" value="ECO:0007669"/>
    <property type="project" value="InterPro"/>
</dbReference>
<dbReference type="GO" id="GO:0006412">
    <property type="term" value="P:translation"/>
    <property type="evidence" value="ECO:0007669"/>
    <property type="project" value="UniProtKB-UniRule"/>
</dbReference>
<dbReference type="FunFam" id="3.30.230.10:FF:000001">
    <property type="entry name" value="30S ribosomal protein S9"/>
    <property type="match status" value="1"/>
</dbReference>
<dbReference type="Gene3D" id="3.30.230.10">
    <property type="match status" value="1"/>
</dbReference>
<dbReference type="HAMAP" id="MF_00532_B">
    <property type="entry name" value="Ribosomal_uS9_B"/>
    <property type="match status" value="1"/>
</dbReference>
<dbReference type="InterPro" id="IPR020568">
    <property type="entry name" value="Ribosomal_Su5_D2-typ_SF"/>
</dbReference>
<dbReference type="InterPro" id="IPR000754">
    <property type="entry name" value="Ribosomal_uS9"/>
</dbReference>
<dbReference type="InterPro" id="IPR023035">
    <property type="entry name" value="Ribosomal_uS9_bac/plastid"/>
</dbReference>
<dbReference type="InterPro" id="IPR020574">
    <property type="entry name" value="Ribosomal_uS9_CS"/>
</dbReference>
<dbReference type="InterPro" id="IPR014721">
    <property type="entry name" value="Ribsml_uS5_D2-typ_fold_subgr"/>
</dbReference>
<dbReference type="NCBIfam" id="NF001099">
    <property type="entry name" value="PRK00132.1"/>
    <property type="match status" value="1"/>
</dbReference>
<dbReference type="PANTHER" id="PTHR21569">
    <property type="entry name" value="RIBOSOMAL PROTEIN S9"/>
    <property type="match status" value="1"/>
</dbReference>
<dbReference type="PANTHER" id="PTHR21569:SF1">
    <property type="entry name" value="SMALL RIBOSOMAL SUBUNIT PROTEIN US9M"/>
    <property type="match status" value="1"/>
</dbReference>
<dbReference type="Pfam" id="PF00380">
    <property type="entry name" value="Ribosomal_S9"/>
    <property type="match status" value="1"/>
</dbReference>
<dbReference type="SUPFAM" id="SSF54211">
    <property type="entry name" value="Ribosomal protein S5 domain 2-like"/>
    <property type="match status" value="1"/>
</dbReference>
<dbReference type="PROSITE" id="PS00360">
    <property type="entry name" value="RIBOSOMAL_S9"/>
    <property type="match status" value="1"/>
</dbReference>
<name>RS9_CUPTR</name>
<proteinExistence type="inferred from homology"/>
<feature type="chain" id="PRO_1000128111" description="Small ribosomal subunit protein uS9">
    <location>
        <begin position="1"/>
        <end position="130"/>
    </location>
</feature>
<gene>
    <name evidence="1" type="primary">rpsI</name>
    <name type="ordered locus">RALTA_A0439</name>
</gene>
<comment type="similarity">
    <text evidence="1">Belongs to the universal ribosomal protein uS9 family.</text>
</comment>